<gene>
    <name type="primary">RpL15</name>
    <name type="synonym">ZITI</name>
    <name type="ORF">CG17420</name>
</gene>
<reference key="1">
    <citation type="submission" date="1997-10" db="EMBL/GenBank/DDBJ databases">
        <authorList>
            <person name="Inaguma Y."/>
            <person name="Joanisse D.R."/>
            <person name="Tanguay R.M."/>
        </authorList>
    </citation>
    <scope>NUCLEOTIDE SEQUENCE [MRNA]</scope>
</reference>
<reference key="2">
    <citation type="journal article" date="2000" name="Science">
        <title>The genome sequence of Drosophila melanogaster.</title>
        <authorList>
            <person name="Adams M.D."/>
            <person name="Celniker S.E."/>
            <person name="Holt R.A."/>
            <person name="Evans C.A."/>
            <person name="Gocayne J.D."/>
            <person name="Amanatides P.G."/>
            <person name="Scherer S.E."/>
            <person name="Li P.W."/>
            <person name="Hoskins R.A."/>
            <person name="Galle R.F."/>
            <person name="George R.A."/>
            <person name="Lewis S.E."/>
            <person name="Richards S."/>
            <person name="Ashburner M."/>
            <person name="Henderson S.N."/>
            <person name="Sutton G.G."/>
            <person name="Wortman J.R."/>
            <person name="Yandell M.D."/>
            <person name="Zhang Q."/>
            <person name="Chen L.X."/>
            <person name="Brandon R.C."/>
            <person name="Rogers Y.-H.C."/>
            <person name="Blazej R.G."/>
            <person name="Champe M."/>
            <person name="Pfeiffer B.D."/>
            <person name="Wan K.H."/>
            <person name="Doyle C."/>
            <person name="Baxter E.G."/>
            <person name="Helt G."/>
            <person name="Nelson C.R."/>
            <person name="Miklos G.L.G."/>
            <person name="Abril J.F."/>
            <person name="Agbayani A."/>
            <person name="An H.-J."/>
            <person name="Andrews-Pfannkoch C."/>
            <person name="Baldwin D."/>
            <person name="Ballew R.M."/>
            <person name="Basu A."/>
            <person name="Baxendale J."/>
            <person name="Bayraktaroglu L."/>
            <person name="Beasley E.M."/>
            <person name="Beeson K.Y."/>
            <person name="Benos P.V."/>
            <person name="Berman B.P."/>
            <person name="Bhandari D."/>
            <person name="Bolshakov S."/>
            <person name="Borkova D."/>
            <person name="Botchan M.R."/>
            <person name="Bouck J."/>
            <person name="Brokstein P."/>
            <person name="Brottier P."/>
            <person name="Burtis K.C."/>
            <person name="Busam D.A."/>
            <person name="Butler H."/>
            <person name="Cadieu E."/>
            <person name="Center A."/>
            <person name="Chandra I."/>
            <person name="Cherry J.M."/>
            <person name="Cawley S."/>
            <person name="Dahlke C."/>
            <person name="Davenport L.B."/>
            <person name="Davies P."/>
            <person name="de Pablos B."/>
            <person name="Delcher A."/>
            <person name="Deng Z."/>
            <person name="Mays A.D."/>
            <person name="Dew I."/>
            <person name="Dietz S.M."/>
            <person name="Dodson K."/>
            <person name="Doup L.E."/>
            <person name="Downes M."/>
            <person name="Dugan-Rocha S."/>
            <person name="Dunkov B.C."/>
            <person name="Dunn P."/>
            <person name="Durbin K.J."/>
            <person name="Evangelista C.C."/>
            <person name="Ferraz C."/>
            <person name="Ferriera S."/>
            <person name="Fleischmann W."/>
            <person name="Fosler C."/>
            <person name="Gabrielian A.E."/>
            <person name="Garg N.S."/>
            <person name="Gelbart W.M."/>
            <person name="Glasser K."/>
            <person name="Glodek A."/>
            <person name="Gong F."/>
            <person name="Gorrell J.H."/>
            <person name="Gu Z."/>
            <person name="Guan P."/>
            <person name="Harris M."/>
            <person name="Harris N.L."/>
            <person name="Harvey D.A."/>
            <person name="Heiman T.J."/>
            <person name="Hernandez J.R."/>
            <person name="Houck J."/>
            <person name="Hostin D."/>
            <person name="Houston K.A."/>
            <person name="Howland T.J."/>
            <person name="Wei M.-H."/>
            <person name="Ibegwam C."/>
            <person name="Jalali M."/>
            <person name="Kalush F."/>
            <person name="Karpen G.H."/>
            <person name="Ke Z."/>
            <person name="Kennison J.A."/>
            <person name="Ketchum K.A."/>
            <person name="Kimmel B.E."/>
            <person name="Kodira C.D."/>
            <person name="Kraft C.L."/>
            <person name="Kravitz S."/>
            <person name="Kulp D."/>
            <person name="Lai Z."/>
            <person name="Lasko P."/>
            <person name="Lei Y."/>
            <person name="Levitsky A.A."/>
            <person name="Li J.H."/>
            <person name="Li Z."/>
            <person name="Liang Y."/>
            <person name="Lin X."/>
            <person name="Liu X."/>
            <person name="Mattei B."/>
            <person name="McIntosh T.C."/>
            <person name="McLeod M.P."/>
            <person name="McPherson D."/>
            <person name="Merkulov G."/>
            <person name="Milshina N.V."/>
            <person name="Mobarry C."/>
            <person name="Morris J."/>
            <person name="Moshrefi A."/>
            <person name="Mount S.M."/>
            <person name="Moy M."/>
            <person name="Murphy B."/>
            <person name="Murphy L."/>
            <person name="Muzny D.M."/>
            <person name="Nelson D.L."/>
            <person name="Nelson D.R."/>
            <person name="Nelson K.A."/>
            <person name="Nixon K."/>
            <person name="Nusskern D.R."/>
            <person name="Pacleb J.M."/>
            <person name="Palazzolo M."/>
            <person name="Pittman G.S."/>
            <person name="Pan S."/>
            <person name="Pollard J."/>
            <person name="Puri V."/>
            <person name="Reese M.G."/>
            <person name="Reinert K."/>
            <person name="Remington K."/>
            <person name="Saunders R.D.C."/>
            <person name="Scheeler F."/>
            <person name="Shen H."/>
            <person name="Shue B.C."/>
            <person name="Siden-Kiamos I."/>
            <person name="Simpson M."/>
            <person name="Skupski M.P."/>
            <person name="Smith T.J."/>
            <person name="Spier E."/>
            <person name="Spradling A.C."/>
            <person name="Stapleton M."/>
            <person name="Strong R."/>
            <person name="Sun E."/>
            <person name="Svirskas R."/>
            <person name="Tector C."/>
            <person name="Turner R."/>
            <person name="Venter E."/>
            <person name="Wang A.H."/>
            <person name="Wang X."/>
            <person name="Wang Z.-Y."/>
            <person name="Wassarman D.A."/>
            <person name="Weinstock G.M."/>
            <person name="Weissenbach J."/>
            <person name="Williams S.M."/>
            <person name="Woodage T."/>
            <person name="Worley K.C."/>
            <person name="Wu D."/>
            <person name="Yang S."/>
            <person name="Yao Q.A."/>
            <person name="Ye J."/>
            <person name="Yeh R.-F."/>
            <person name="Zaveri J.S."/>
            <person name="Zhan M."/>
            <person name="Zhang G."/>
            <person name="Zhao Q."/>
            <person name="Zheng L."/>
            <person name="Zheng X.H."/>
            <person name="Zhong F.N."/>
            <person name="Zhong W."/>
            <person name="Zhou X."/>
            <person name="Zhu S.C."/>
            <person name="Zhu X."/>
            <person name="Smith H.O."/>
            <person name="Gibbs R.A."/>
            <person name="Myers E.W."/>
            <person name="Rubin G.M."/>
            <person name="Venter J.C."/>
        </authorList>
    </citation>
    <scope>NUCLEOTIDE SEQUENCE [LARGE SCALE GENOMIC DNA]</scope>
    <source>
        <strain>Berkeley</strain>
    </source>
</reference>
<reference key="3">
    <citation type="journal article" date="2002" name="Genome Biol.">
        <title>Annotation of the Drosophila melanogaster euchromatic genome: a systematic review.</title>
        <authorList>
            <person name="Misra S."/>
            <person name="Crosby M.A."/>
            <person name="Mungall C.J."/>
            <person name="Matthews B.B."/>
            <person name="Campbell K.S."/>
            <person name="Hradecky P."/>
            <person name="Huang Y."/>
            <person name="Kaminker J.S."/>
            <person name="Millburn G.H."/>
            <person name="Prochnik S.E."/>
            <person name="Smith C.D."/>
            <person name="Tupy J.L."/>
            <person name="Whitfield E.J."/>
            <person name="Bayraktaroglu L."/>
            <person name="Berman B.P."/>
            <person name="Bettencourt B.R."/>
            <person name="Celniker S.E."/>
            <person name="de Grey A.D.N.J."/>
            <person name="Drysdale R.A."/>
            <person name="Harris N.L."/>
            <person name="Richter J."/>
            <person name="Russo S."/>
            <person name="Schroeder A.J."/>
            <person name="Shu S.Q."/>
            <person name="Stapleton M."/>
            <person name="Yamada C."/>
            <person name="Ashburner M."/>
            <person name="Gelbart W.M."/>
            <person name="Rubin G.M."/>
            <person name="Lewis S.E."/>
        </authorList>
    </citation>
    <scope>GENOME REANNOTATION</scope>
    <source>
        <strain>Berkeley</strain>
    </source>
</reference>
<reference key="4">
    <citation type="journal article" date="2002" name="Genome Biol.">
        <title>A Drosophila full-length cDNA resource.</title>
        <authorList>
            <person name="Stapleton M."/>
            <person name="Carlson J.W."/>
            <person name="Brokstein P."/>
            <person name="Yu C."/>
            <person name="Champe M."/>
            <person name="George R.A."/>
            <person name="Guarin H."/>
            <person name="Kronmiller B."/>
            <person name="Pacleb J.M."/>
            <person name="Park S."/>
            <person name="Wan K.H."/>
            <person name="Rubin G.M."/>
            <person name="Celniker S.E."/>
        </authorList>
    </citation>
    <scope>NUCLEOTIDE SEQUENCE [LARGE SCALE MRNA]</scope>
    <source>
        <strain>Berkeley</strain>
        <tissue>Embryo</tissue>
    </source>
</reference>
<reference key="5">
    <citation type="journal article" date="2013" name="Nature">
        <title>Structures of the human and Drosophila 80S ribosome.</title>
        <authorList>
            <person name="Anger A.M."/>
            <person name="Armache J.P."/>
            <person name="Berninghausen O."/>
            <person name="Habeck M."/>
            <person name="Subklewe M."/>
            <person name="Wilson D.N."/>
            <person name="Beckmann R."/>
        </authorList>
    </citation>
    <scope>STRUCTURE BY ELECTRON MICROSCOPY (6.0 ANGSTROMS) OF THE 80S RIBOSOME</scope>
</reference>
<accession>O17445</accession>
<accession>A8Y561</accession>
<accession>Q7PL86</accession>
<accession>Q9W5N1</accession>
<proteinExistence type="evidence at protein level"/>
<keyword id="KW-0002">3D-structure</keyword>
<keyword id="KW-1185">Reference proteome</keyword>
<keyword id="KW-0687">Ribonucleoprotein</keyword>
<keyword id="KW-0689">Ribosomal protein</keyword>
<organism>
    <name type="scientific">Drosophila melanogaster</name>
    <name type="common">Fruit fly</name>
    <dbReference type="NCBI Taxonomy" id="7227"/>
    <lineage>
        <taxon>Eukaryota</taxon>
        <taxon>Metazoa</taxon>
        <taxon>Ecdysozoa</taxon>
        <taxon>Arthropoda</taxon>
        <taxon>Hexapoda</taxon>
        <taxon>Insecta</taxon>
        <taxon>Pterygota</taxon>
        <taxon>Neoptera</taxon>
        <taxon>Endopterygota</taxon>
        <taxon>Diptera</taxon>
        <taxon>Brachycera</taxon>
        <taxon>Muscomorpha</taxon>
        <taxon>Ephydroidea</taxon>
        <taxon>Drosophilidae</taxon>
        <taxon>Drosophila</taxon>
        <taxon>Sophophora</taxon>
    </lineage>
</organism>
<evidence type="ECO:0000256" key="1">
    <source>
        <dbReference type="SAM" id="MobiDB-lite"/>
    </source>
</evidence>
<evidence type="ECO:0000305" key="2"/>
<name>RL15_DROME</name>
<sequence>MGAYRYMQELYRKKQSDVMRYLLRIRVWQYRQLTKLHRSPRPTRPDKARRLGYRAKQGFVIYRIRVRRGGRKRPVPKGCTYGKPKSHGVNQLKPYRGLQSIAEERVGRRLGGLRVLNSYWIAQDASYKYFEVILIDTHHSAIRRDPKINWICKHVHKHRELRGLTSAGKSSRGIGKGYRYSQTIGGSRRAAWKRKNREHMHRKR</sequence>
<dbReference type="EMBL" id="AF030251">
    <property type="protein sequence ID" value="AAB84223.1"/>
    <property type="molecule type" value="mRNA"/>
</dbReference>
<dbReference type="EMBL" id="AE014296">
    <property type="protein sequence ID" value="EAA46270.1"/>
    <property type="molecule type" value="Genomic_DNA"/>
</dbReference>
<dbReference type="EMBL" id="AE014296">
    <property type="protein sequence ID" value="EAA46271.1"/>
    <property type="molecule type" value="Genomic_DNA"/>
</dbReference>
<dbReference type="EMBL" id="AE014296">
    <property type="protein sequence ID" value="EDP28095.1"/>
    <property type="molecule type" value="Genomic_DNA"/>
</dbReference>
<dbReference type="EMBL" id="AY094841">
    <property type="protein sequence ID" value="AAM11194.1"/>
    <property type="molecule type" value="mRNA"/>
</dbReference>
<dbReference type="RefSeq" id="NP_001015155.1">
    <property type="nucleotide sequence ID" value="NM_001015155.3"/>
</dbReference>
<dbReference type="RefSeq" id="NP_001015156.1">
    <property type="nucleotide sequence ID" value="NM_001015156.2"/>
</dbReference>
<dbReference type="RefSeq" id="NP_001104429.2">
    <property type="nucleotide sequence ID" value="NM_001110959.3"/>
</dbReference>
<dbReference type="RefSeq" id="NP_001104430.1">
    <property type="nucleotide sequence ID" value="NM_001110960.2"/>
</dbReference>
<dbReference type="RefSeq" id="NP_001245395.1">
    <property type="nucleotide sequence ID" value="NM_001258466.1"/>
</dbReference>
<dbReference type="RefSeq" id="NP_001245396.1">
    <property type="nucleotide sequence ID" value="NM_001258467.1"/>
</dbReference>
<dbReference type="RefSeq" id="NP_001245397.1">
    <property type="nucleotide sequence ID" value="NM_001258468.1"/>
</dbReference>
<dbReference type="RefSeq" id="NP_001245398.1">
    <property type="nucleotide sequence ID" value="NM_001258469.1"/>
</dbReference>
<dbReference type="PDB" id="4V6W">
    <property type="method" value="EM"/>
    <property type="resolution" value="6.00 A"/>
    <property type="chains" value="CN=1-204"/>
</dbReference>
<dbReference type="PDB" id="6XU6">
    <property type="method" value="EM"/>
    <property type="resolution" value="3.50 A"/>
    <property type="chains" value="CN=2-204"/>
</dbReference>
<dbReference type="PDB" id="6XU7">
    <property type="method" value="EM"/>
    <property type="resolution" value="4.90 A"/>
    <property type="chains" value="CN=2-204"/>
</dbReference>
<dbReference type="PDB" id="6XU8">
    <property type="method" value="EM"/>
    <property type="resolution" value="3.00 A"/>
    <property type="chains" value="CN=2-204"/>
</dbReference>
<dbReference type="PDBsum" id="4V6W"/>
<dbReference type="PDBsum" id="6XU6"/>
<dbReference type="PDBsum" id="6XU7"/>
<dbReference type="PDBsum" id="6XU8"/>
<dbReference type="EMDB" id="EMD-10622"/>
<dbReference type="EMDB" id="EMD-10623"/>
<dbReference type="EMDB" id="EMD-10624"/>
<dbReference type="SMR" id="O17445"/>
<dbReference type="BioGRID" id="78043">
    <property type="interactions" value="126"/>
</dbReference>
<dbReference type="DIP" id="DIP-17499N"/>
<dbReference type="FunCoup" id="O17445">
    <property type="interactions" value="1603"/>
</dbReference>
<dbReference type="IntAct" id="O17445">
    <property type="interactions" value="1"/>
</dbReference>
<dbReference type="STRING" id="7227.FBpp0112466"/>
<dbReference type="PaxDb" id="7227-FBpp0300652"/>
<dbReference type="DNASU" id="3354918"/>
<dbReference type="EnsemblMetazoa" id="FBtr0113742">
    <property type="protein sequence ID" value="FBpp0112465"/>
    <property type="gene ID" value="FBgn0028697"/>
</dbReference>
<dbReference type="EnsemblMetazoa" id="FBtr0113743">
    <property type="protein sequence ID" value="FBpp0112466"/>
    <property type="gene ID" value="FBgn0028697"/>
</dbReference>
<dbReference type="EnsemblMetazoa" id="FBtr0113744">
    <property type="protein sequence ID" value="FBpp0112467"/>
    <property type="gene ID" value="FBgn0028697"/>
</dbReference>
<dbReference type="EnsemblMetazoa" id="FBtr0301801">
    <property type="protein sequence ID" value="FBpp0291015"/>
    <property type="gene ID" value="FBgn0028697"/>
</dbReference>
<dbReference type="EnsemblMetazoa" id="FBtr0308333">
    <property type="protein sequence ID" value="FBpp0300652"/>
    <property type="gene ID" value="FBgn0028697"/>
</dbReference>
<dbReference type="EnsemblMetazoa" id="FBtr0308334">
    <property type="protein sequence ID" value="FBpp0300653"/>
    <property type="gene ID" value="FBgn0028697"/>
</dbReference>
<dbReference type="EnsemblMetazoa" id="FBtr0308335">
    <property type="protein sequence ID" value="FBpp0300654"/>
    <property type="gene ID" value="FBgn0028697"/>
</dbReference>
<dbReference type="EnsemblMetazoa" id="FBtr0308336">
    <property type="protein sequence ID" value="FBpp0300655"/>
    <property type="gene ID" value="FBgn0028697"/>
</dbReference>
<dbReference type="GeneID" id="3354918"/>
<dbReference type="KEGG" id="dme:Dmel_CG17420"/>
<dbReference type="AGR" id="FB:FBgn0028697"/>
<dbReference type="CTD" id="6138"/>
<dbReference type="FlyBase" id="FBgn0028697">
    <property type="gene designation" value="RpL15"/>
</dbReference>
<dbReference type="VEuPathDB" id="VectorBase:FBgn0028697"/>
<dbReference type="eggNOG" id="KOG1678">
    <property type="taxonomic scope" value="Eukaryota"/>
</dbReference>
<dbReference type="GeneTree" id="ENSGT00910000144184"/>
<dbReference type="HOGENOM" id="CLU_080796_0_0_1"/>
<dbReference type="InParanoid" id="O17445"/>
<dbReference type="OMA" id="YIRDAWK"/>
<dbReference type="OrthoDB" id="10255148at2759"/>
<dbReference type="PhylomeDB" id="O17445"/>
<dbReference type="Reactome" id="R-DME-156827">
    <property type="pathway name" value="L13a-mediated translational silencing of Ceruloplasmin expression"/>
</dbReference>
<dbReference type="Reactome" id="R-DME-1799339">
    <property type="pathway name" value="SRP-dependent cotranslational protein targeting to membrane"/>
</dbReference>
<dbReference type="Reactome" id="R-DME-72689">
    <property type="pathway name" value="Formation of a pool of free 40S subunits"/>
</dbReference>
<dbReference type="Reactome" id="R-DME-72706">
    <property type="pathway name" value="GTP hydrolysis and joining of the 60S ribosomal subunit"/>
</dbReference>
<dbReference type="Reactome" id="R-DME-975956">
    <property type="pathway name" value="Nonsense Mediated Decay (NMD) independent of the Exon Junction Complex (EJC)"/>
</dbReference>
<dbReference type="Reactome" id="R-DME-975957">
    <property type="pathway name" value="Nonsense Mediated Decay (NMD) enhanced by the Exon Junction Complex (EJC)"/>
</dbReference>
<dbReference type="SignaLink" id="O17445"/>
<dbReference type="BioGRID-ORCS" id="3354918">
    <property type="hits" value="1 hit in 1 CRISPR screen"/>
</dbReference>
<dbReference type="ChiTaRS" id="RpL15">
    <property type="organism name" value="fly"/>
</dbReference>
<dbReference type="GenomeRNAi" id="3354918"/>
<dbReference type="PRO" id="PR:O17445"/>
<dbReference type="Proteomes" id="UP000000803">
    <property type="component" value="Chromosome 3L"/>
</dbReference>
<dbReference type="Bgee" id="FBgn0028697">
    <property type="expression patterns" value="Expressed in DN1 neuron (Drosophila) in brain and 276 other cell types or tissues"/>
</dbReference>
<dbReference type="ExpressionAtlas" id="O17445">
    <property type="expression patterns" value="baseline and differential"/>
</dbReference>
<dbReference type="GO" id="GO:0022625">
    <property type="term" value="C:cytosolic large ribosomal subunit"/>
    <property type="evidence" value="ECO:0000318"/>
    <property type="project" value="GO_Central"/>
</dbReference>
<dbReference type="GO" id="GO:0022626">
    <property type="term" value="C:cytosolic ribosome"/>
    <property type="evidence" value="ECO:0000314"/>
    <property type="project" value="FlyBase"/>
</dbReference>
<dbReference type="GO" id="GO:0003723">
    <property type="term" value="F:RNA binding"/>
    <property type="evidence" value="ECO:0000318"/>
    <property type="project" value="GO_Central"/>
</dbReference>
<dbReference type="GO" id="GO:0003735">
    <property type="term" value="F:structural constituent of ribosome"/>
    <property type="evidence" value="ECO:0000314"/>
    <property type="project" value="FlyBase"/>
</dbReference>
<dbReference type="GO" id="GO:0002181">
    <property type="term" value="P:cytoplasmic translation"/>
    <property type="evidence" value="ECO:0000318"/>
    <property type="project" value="GO_Central"/>
</dbReference>
<dbReference type="FunFam" id="3.40.1120.10:FF:000001">
    <property type="entry name" value="Ribosomal protein L15"/>
    <property type="match status" value="1"/>
</dbReference>
<dbReference type="Gene3D" id="3.40.1120.10">
    <property type="entry name" value="Ribosomal protein l15e"/>
    <property type="match status" value="1"/>
</dbReference>
<dbReference type="InterPro" id="IPR024794">
    <property type="entry name" value="Rbsml_eL15_core_dom_sf"/>
</dbReference>
<dbReference type="InterPro" id="IPR000439">
    <property type="entry name" value="Ribosomal_eL15"/>
</dbReference>
<dbReference type="InterPro" id="IPR020925">
    <property type="entry name" value="Ribosomal_eL15_CS"/>
</dbReference>
<dbReference type="InterPro" id="IPR012678">
    <property type="entry name" value="Ribosomal_uL23/eL15/eS24_sf"/>
</dbReference>
<dbReference type="NCBIfam" id="NF003269">
    <property type="entry name" value="PRK04243.1"/>
    <property type="match status" value="1"/>
</dbReference>
<dbReference type="PANTHER" id="PTHR11847:SF4">
    <property type="entry name" value="LARGE RIBOSOMAL SUBUNIT PROTEIN EL15"/>
    <property type="match status" value="1"/>
</dbReference>
<dbReference type="PANTHER" id="PTHR11847">
    <property type="entry name" value="RIBOSOMAL PROTEIN L15"/>
    <property type="match status" value="1"/>
</dbReference>
<dbReference type="Pfam" id="PF00827">
    <property type="entry name" value="Ribosomal_L15e"/>
    <property type="match status" value="1"/>
</dbReference>
<dbReference type="SMART" id="SM01384">
    <property type="entry name" value="Ribosomal_L15e"/>
    <property type="match status" value="1"/>
</dbReference>
<dbReference type="SUPFAM" id="SSF54189">
    <property type="entry name" value="Ribosomal proteins S24e, L23 and L15e"/>
    <property type="match status" value="1"/>
</dbReference>
<dbReference type="PROSITE" id="PS01194">
    <property type="entry name" value="RIBOSOMAL_L15E"/>
    <property type="match status" value="1"/>
</dbReference>
<comment type="similarity">
    <text evidence="2">Belongs to the eukaryotic ribosomal protein eL15 family.</text>
</comment>
<protein>
    <recommendedName>
        <fullName evidence="2">Large ribosomal subunit protein eL15</fullName>
    </recommendedName>
    <alternativeName>
        <fullName>60S ribosomal protein L15</fullName>
    </alternativeName>
</protein>
<feature type="chain" id="PRO_0000127555" description="Large ribosomal subunit protein eL15">
    <location>
        <begin position="1"/>
        <end position="204"/>
    </location>
</feature>
<feature type="region of interest" description="Disordered" evidence="1">
    <location>
        <begin position="185"/>
        <end position="204"/>
    </location>
</feature>
<feature type="compositionally biased region" description="Basic residues" evidence="1">
    <location>
        <begin position="190"/>
        <end position="204"/>
    </location>
</feature>